<gene>
    <name type="primary">hisA</name>
    <name type="ordered locus">slr0652</name>
</gene>
<name>HIS4_SYNY3</name>
<evidence type="ECO:0000250" key="1"/>
<evidence type="ECO:0000305" key="2"/>
<protein>
    <recommendedName>
        <fullName>1-(5-phosphoribosyl)-5-[(5-phosphoribosylamino)methylideneamino] imidazole-4-carboxamide isomerase</fullName>
        <ecNumber>5.3.1.16</ecNumber>
    </recommendedName>
    <alternativeName>
        <fullName>Phosphoribosylformimino-5-aminoimidazole carboxamide ribotide isomerase</fullName>
    </alternativeName>
</protein>
<keyword id="KW-0028">Amino-acid biosynthesis</keyword>
<keyword id="KW-0963">Cytoplasm</keyword>
<keyword id="KW-0368">Histidine biosynthesis</keyword>
<keyword id="KW-0413">Isomerase</keyword>
<keyword id="KW-1185">Reference proteome</keyword>
<proteinExistence type="inferred from homology"/>
<dbReference type="EC" id="5.3.1.16"/>
<dbReference type="EMBL" id="BA000022">
    <property type="protein sequence ID" value="BAA18668.1"/>
    <property type="molecule type" value="Genomic_DNA"/>
</dbReference>
<dbReference type="PIR" id="S76756">
    <property type="entry name" value="S76756"/>
</dbReference>
<dbReference type="SMR" id="P74561"/>
<dbReference type="FunCoup" id="P74561">
    <property type="interactions" value="323"/>
</dbReference>
<dbReference type="STRING" id="1148.gene:10500434"/>
<dbReference type="PaxDb" id="1148-1653757"/>
<dbReference type="EnsemblBacteria" id="BAA18668">
    <property type="protein sequence ID" value="BAA18668"/>
    <property type="gene ID" value="BAA18668"/>
</dbReference>
<dbReference type="KEGG" id="syn:slr0652"/>
<dbReference type="eggNOG" id="COG0106">
    <property type="taxonomic scope" value="Bacteria"/>
</dbReference>
<dbReference type="InParanoid" id="P74561"/>
<dbReference type="PhylomeDB" id="P74561"/>
<dbReference type="UniPathway" id="UPA00031">
    <property type="reaction ID" value="UER00009"/>
</dbReference>
<dbReference type="Proteomes" id="UP000001425">
    <property type="component" value="Chromosome"/>
</dbReference>
<dbReference type="GO" id="GO:0005737">
    <property type="term" value="C:cytoplasm"/>
    <property type="evidence" value="ECO:0000318"/>
    <property type="project" value="GO_Central"/>
</dbReference>
<dbReference type="GO" id="GO:0003949">
    <property type="term" value="F:1-(5-phosphoribosyl)-5-[(5-phosphoribosylamino)methylideneamino]imidazole-4-carboxamide isomerase activity"/>
    <property type="evidence" value="ECO:0000318"/>
    <property type="project" value="GO_Central"/>
</dbReference>
<dbReference type="GO" id="GO:0000105">
    <property type="term" value="P:L-histidine biosynthetic process"/>
    <property type="evidence" value="ECO:0000318"/>
    <property type="project" value="GO_Central"/>
</dbReference>
<dbReference type="CDD" id="cd04732">
    <property type="entry name" value="HisA"/>
    <property type="match status" value="1"/>
</dbReference>
<dbReference type="FunFam" id="3.20.20.70:FF:000009">
    <property type="entry name" value="1-(5-phosphoribosyl)-5-[(5-phosphoribosylamino)methylideneamino] imidazole-4-carboxamide isomerase"/>
    <property type="match status" value="1"/>
</dbReference>
<dbReference type="Gene3D" id="3.20.20.70">
    <property type="entry name" value="Aldolase class I"/>
    <property type="match status" value="1"/>
</dbReference>
<dbReference type="HAMAP" id="MF_01014">
    <property type="entry name" value="HisA"/>
    <property type="match status" value="1"/>
</dbReference>
<dbReference type="InterPro" id="IPR013785">
    <property type="entry name" value="Aldolase_TIM"/>
</dbReference>
<dbReference type="InterPro" id="IPR006062">
    <property type="entry name" value="His_biosynth"/>
</dbReference>
<dbReference type="InterPro" id="IPR006063">
    <property type="entry name" value="HisA_bact_arch"/>
</dbReference>
<dbReference type="InterPro" id="IPR044524">
    <property type="entry name" value="Isoase_HisA-like"/>
</dbReference>
<dbReference type="InterPro" id="IPR023016">
    <property type="entry name" value="Isoase_HisA-like_bact"/>
</dbReference>
<dbReference type="InterPro" id="IPR011060">
    <property type="entry name" value="RibuloseP-bd_barrel"/>
</dbReference>
<dbReference type="NCBIfam" id="TIGR00007">
    <property type="entry name" value="1-(5-phosphoribosyl)-5-[(5-phosphoribosylamino)methylideneamino]imidazole-4-carboxamide isomerase"/>
    <property type="match status" value="1"/>
</dbReference>
<dbReference type="NCBIfam" id="NF010112">
    <property type="entry name" value="PRK13585.1"/>
    <property type="match status" value="1"/>
</dbReference>
<dbReference type="PANTHER" id="PTHR43090">
    <property type="entry name" value="1-(5-PHOSPHORIBOSYL)-5-[(5-PHOSPHORIBOSYLAMINO)METHYLIDENEAMINO] IMIDAZOLE-4-CARBOXAMIDE ISOMERASE"/>
    <property type="match status" value="1"/>
</dbReference>
<dbReference type="PANTHER" id="PTHR43090:SF2">
    <property type="entry name" value="1-(5-PHOSPHORIBOSYL)-5-[(5-PHOSPHORIBOSYLAMINO)METHYLIDENEAMINO] IMIDAZOLE-4-CARBOXAMIDE ISOMERASE"/>
    <property type="match status" value="1"/>
</dbReference>
<dbReference type="Pfam" id="PF00977">
    <property type="entry name" value="His_biosynth"/>
    <property type="match status" value="1"/>
</dbReference>
<dbReference type="SUPFAM" id="SSF51366">
    <property type="entry name" value="Ribulose-phoshate binding barrel"/>
    <property type="match status" value="1"/>
</dbReference>
<comment type="catalytic activity">
    <reaction>
        <text>1-(5-phospho-beta-D-ribosyl)-5-[(5-phospho-beta-D-ribosylamino)methylideneamino]imidazole-4-carboxamide = 5-[(5-phospho-1-deoxy-D-ribulos-1-ylimino)methylamino]-1-(5-phospho-beta-D-ribosyl)imidazole-4-carboxamide</text>
        <dbReference type="Rhea" id="RHEA:15469"/>
        <dbReference type="ChEBI" id="CHEBI:58435"/>
        <dbReference type="ChEBI" id="CHEBI:58525"/>
        <dbReference type="EC" id="5.3.1.16"/>
    </reaction>
</comment>
<comment type="pathway">
    <text>Amino-acid biosynthesis; L-histidine biosynthesis; L-histidine from 5-phospho-alpha-D-ribose 1-diphosphate: step 4/9.</text>
</comment>
<comment type="subcellular location">
    <subcellularLocation>
        <location evidence="1">Cytoplasm</location>
    </subcellularLocation>
</comment>
<comment type="similarity">
    <text evidence="2">Belongs to the HisA/HisF family.</text>
</comment>
<feature type="chain" id="PRO_0000142066" description="1-(5-phosphoribosyl)-5-[(5-phosphoribosylamino)methylideneamino] imidazole-4-carboxamide isomerase">
    <location>
        <begin position="1"/>
        <end position="256"/>
    </location>
</feature>
<feature type="active site" description="Proton acceptor" evidence="1">
    <location>
        <position position="8"/>
    </location>
</feature>
<feature type="active site" description="Proton donor" evidence="1">
    <location>
        <position position="129"/>
    </location>
</feature>
<sequence>MKILPAIDLLGGKCVRLYQGDYDQSQVYHEDPVEVARQWQAQGASRLHLVDLDGAKEGQPVNLTAIANIVEALTIPVQVGGGLRDRNRVKQLLDLGVGRVILGTIAVENPDLVGELCAEFPGQIVVGIDARNGKVATRGWLETSTVEAGELAQRMEKLGAAAIIYTDIHRDGTMQGPNLDALRQLASQLTIPVIASGGVSQVEDLLNLLSLESLGVNGVIIGKALYTGDIQLAEAIRAVGNGRWQDVPPLDFPRLG</sequence>
<organism>
    <name type="scientific">Synechocystis sp. (strain ATCC 27184 / PCC 6803 / Kazusa)</name>
    <dbReference type="NCBI Taxonomy" id="1111708"/>
    <lineage>
        <taxon>Bacteria</taxon>
        <taxon>Bacillati</taxon>
        <taxon>Cyanobacteriota</taxon>
        <taxon>Cyanophyceae</taxon>
        <taxon>Synechococcales</taxon>
        <taxon>Merismopediaceae</taxon>
        <taxon>Synechocystis</taxon>
    </lineage>
</organism>
<accession>P74561</accession>
<reference key="1">
    <citation type="journal article" date="1996" name="DNA Res.">
        <title>Sequence analysis of the genome of the unicellular cyanobacterium Synechocystis sp. strain PCC6803. II. Sequence determination of the entire genome and assignment of potential protein-coding regions.</title>
        <authorList>
            <person name="Kaneko T."/>
            <person name="Sato S."/>
            <person name="Kotani H."/>
            <person name="Tanaka A."/>
            <person name="Asamizu E."/>
            <person name="Nakamura Y."/>
            <person name="Miyajima N."/>
            <person name="Hirosawa M."/>
            <person name="Sugiura M."/>
            <person name="Sasamoto S."/>
            <person name="Kimura T."/>
            <person name="Hosouchi T."/>
            <person name="Matsuno A."/>
            <person name="Muraki A."/>
            <person name="Nakazaki N."/>
            <person name="Naruo K."/>
            <person name="Okumura S."/>
            <person name="Shimpo S."/>
            <person name="Takeuchi C."/>
            <person name="Wada T."/>
            <person name="Watanabe A."/>
            <person name="Yamada M."/>
            <person name="Yasuda M."/>
            <person name="Tabata S."/>
        </authorList>
    </citation>
    <scope>NUCLEOTIDE SEQUENCE [LARGE SCALE GENOMIC DNA]</scope>
    <source>
        <strain>ATCC 27184 / PCC 6803 / Kazusa</strain>
    </source>
</reference>